<reference key="1">
    <citation type="journal article" date="2004" name="J. Bacteriol.">
        <title>Complete genome sequence of Rickettsia typhi and comparison with sequences of other Rickettsiae.</title>
        <authorList>
            <person name="McLeod M.P."/>
            <person name="Qin X."/>
            <person name="Karpathy S.E."/>
            <person name="Gioia J."/>
            <person name="Highlander S.K."/>
            <person name="Fox G.E."/>
            <person name="McNeill T.Z."/>
            <person name="Jiang H."/>
            <person name="Muzny D."/>
            <person name="Jacob L.S."/>
            <person name="Hawes A.C."/>
            <person name="Sodergren E."/>
            <person name="Gill R."/>
            <person name="Hume J."/>
            <person name="Morgan M."/>
            <person name="Fan G."/>
            <person name="Amin A.G."/>
            <person name="Gibbs R.A."/>
            <person name="Hong C."/>
            <person name="Yu X.-J."/>
            <person name="Walker D.H."/>
            <person name="Weinstock G.M."/>
        </authorList>
    </citation>
    <scope>NUCLEOTIDE SEQUENCE [LARGE SCALE GENOMIC DNA]</scope>
    <source>
        <strain>ATCC VR-144 / Wilmington</strain>
    </source>
</reference>
<protein>
    <recommendedName>
        <fullName evidence="1">ATP synthase subunit b</fullName>
    </recommendedName>
    <alternativeName>
        <fullName evidence="1">ATP synthase F(0) sector subunit b</fullName>
    </alternativeName>
    <alternativeName>
        <fullName evidence="1">ATPase subunit I</fullName>
    </alternativeName>
    <alternativeName>
        <fullName evidence="1">F-type ATPase subunit b</fullName>
        <shortName evidence="1">F-ATPase subunit b</shortName>
    </alternativeName>
</protein>
<dbReference type="EMBL" id="AE017197">
    <property type="protein sequence ID" value="AAU03594.1"/>
    <property type="molecule type" value="Genomic_DNA"/>
</dbReference>
<dbReference type="RefSeq" id="WP_011190581.1">
    <property type="nucleotide sequence ID" value="NC_006142.1"/>
</dbReference>
<dbReference type="SMR" id="Q68XP8"/>
<dbReference type="KEGG" id="rty:RT0108"/>
<dbReference type="eggNOG" id="COG0711">
    <property type="taxonomic scope" value="Bacteria"/>
</dbReference>
<dbReference type="HOGENOM" id="CLU_1676510_0_0_5"/>
<dbReference type="OrthoDB" id="7161077at2"/>
<dbReference type="Proteomes" id="UP000000604">
    <property type="component" value="Chromosome"/>
</dbReference>
<dbReference type="GO" id="GO:0005886">
    <property type="term" value="C:plasma membrane"/>
    <property type="evidence" value="ECO:0007669"/>
    <property type="project" value="UniProtKB-SubCell"/>
</dbReference>
<dbReference type="GO" id="GO:0045259">
    <property type="term" value="C:proton-transporting ATP synthase complex"/>
    <property type="evidence" value="ECO:0007669"/>
    <property type="project" value="UniProtKB-KW"/>
</dbReference>
<dbReference type="GO" id="GO:0046933">
    <property type="term" value="F:proton-transporting ATP synthase activity, rotational mechanism"/>
    <property type="evidence" value="ECO:0007669"/>
    <property type="project" value="UniProtKB-UniRule"/>
</dbReference>
<dbReference type="CDD" id="cd06503">
    <property type="entry name" value="ATP-synt_Fo_b"/>
    <property type="match status" value="1"/>
</dbReference>
<dbReference type="HAMAP" id="MF_01398">
    <property type="entry name" value="ATP_synth_b_bprime"/>
    <property type="match status" value="1"/>
</dbReference>
<dbReference type="InterPro" id="IPR002146">
    <property type="entry name" value="ATP_synth_b/b'su_bac/chlpt"/>
</dbReference>
<dbReference type="NCBIfam" id="NF005129">
    <property type="entry name" value="PRK06568.1"/>
    <property type="match status" value="1"/>
</dbReference>
<dbReference type="Pfam" id="PF00430">
    <property type="entry name" value="ATP-synt_B"/>
    <property type="match status" value="1"/>
</dbReference>
<comment type="function">
    <text evidence="1">F(1)F(0) ATP synthase produces ATP from ADP in the presence of a proton or sodium gradient. F-type ATPases consist of two structural domains, F(1) containing the extramembraneous catalytic core and F(0) containing the membrane proton channel, linked together by a central stalk and a peripheral stalk. During catalysis, ATP synthesis in the catalytic domain of F(1) is coupled via a rotary mechanism of the central stalk subunits to proton translocation.</text>
</comment>
<comment type="function">
    <text evidence="1">Component of the F(0) channel, it forms part of the peripheral stalk, linking F(1) to F(0).</text>
</comment>
<comment type="subunit">
    <text evidence="1">F-type ATPases have 2 components, F(1) - the catalytic core - and F(0) - the membrane proton channel. F(1) has five subunits: alpha(3), beta(3), gamma(1), delta(1), epsilon(1). F(0) has three main subunits: a(1), b(2) and c(10-14). The alpha and beta chains form an alternating ring which encloses part of the gamma chain. F(1) is attached to F(0) by a central stalk formed by the gamma and epsilon chains, while a peripheral stalk is formed by the delta and b chains.</text>
</comment>
<comment type="subcellular location">
    <subcellularLocation>
        <location evidence="1">Cell inner membrane</location>
        <topology evidence="1">Single-pass membrane protein</topology>
    </subcellularLocation>
</comment>
<comment type="similarity">
    <text evidence="1">Belongs to the ATPase B chain family.</text>
</comment>
<sequence length="167" mass="19288">MNFLDESFLLAVSFVIFIYLIYRPAKKAILNSLDTKIIEIQEKVLKAKKLKEDAALLFEQTKVQIQKLEALRSQMIEESDKATQKIIQDKTKAMEEFLEQKKADAIQLIQNQKLIASKDLQDEFCDEVITLVSKYFRSVQLSERSIAKNLMDKSDFAHNASHATHLH</sequence>
<feature type="chain" id="PRO_0000288724" description="ATP synthase subunit b">
    <location>
        <begin position="1"/>
        <end position="167"/>
    </location>
</feature>
<feature type="transmembrane region" description="Helical" evidence="1">
    <location>
        <begin position="7"/>
        <end position="25"/>
    </location>
</feature>
<name>ATPF_RICTY</name>
<keyword id="KW-0066">ATP synthesis</keyword>
<keyword id="KW-0997">Cell inner membrane</keyword>
<keyword id="KW-1003">Cell membrane</keyword>
<keyword id="KW-0138">CF(0)</keyword>
<keyword id="KW-0375">Hydrogen ion transport</keyword>
<keyword id="KW-0406">Ion transport</keyword>
<keyword id="KW-0472">Membrane</keyword>
<keyword id="KW-0812">Transmembrane</keyword>
<keyword id="KW-1133">Transmembrane helix</keyword>
<keyword id="KW-0813">Transport</keyword>
<gene>
    <name evidence="1" type="primary">atpF</name>
    <name type="ordered locus">RT0108</name>
</gene>
<organism>
    <name type="scientific">Rickettsia typhi (strain ATCC VR-144 / Wilmington)</name>
    <dbReference type="NCBI Taxonomy" id="257363"/>
    <lineage>
        <taxon>Bacteria</taxon>
        <taxon>Pseudomonadati</taxon>
        <taxon>Pseudomonadota</taxon>
        <taxon>Alphaproteobacteria</taxon>
        <taxon>Rickettsiales</taxon>
        <taxon>Rickettsiaceae</taxon>
        <taxon>Rickettsieae</taxon>
        <taxon>Rickettsia</taxon>
        <taxon>typhus group</taxon>
    </lineage>
</organism>
<accession>Q68XP8</accession>
<proteinExistence type="inferred from homology"/>
<evidence type="ECO:0000255" key="1">
    <source>
        <dbReference type="HAMAP-Rule" id="MF_01398"/>
    </source>
</evidence>